<keyword id="KW-0028">Amino-acid biosynthesis</keyword>
<keyword id="KW-0057">Aromatic amino acid biosynthesis</keyword>
<keyword id="KW-0963">Cytoplasm</keyword>
<keyword id="KW-1185">Reference proteome</keyword>
<keyword id="KW-0808">Transferase</keyword>
<organism>
    <name type="scientific">Pectobacterium atrosepticum (strain SCRI 1043 / ATCC BAA-672)</name>
    <name type="common">Erwinia carotovora subsp. atroseptica</name>
    <dbReference type="NCBI Taxonomy" id="218491"/>
    <lineage>
        <taxon>Bacteria</taxon>
        <taxon>Pseudomonadati</taxon>
        <taxon>Pseudomonadota</taxon>
        <taxon>Gammaproteobacteria</taxon>
        <taxon>Enterobacterales</taxon>
        <taxon>Pectobacteriaceae</taxon>
        <taxon>Pectobacterium</taxon>
    </lineage>
</organism>
<sequence length="429" mass="46602">MQESLTLHPIKLINGTLNLPGSKSVSNRALLLAALSEGKTRLTNLLDSDDVRHMLTALTALGVEYHLSSDRTVCEIIGLGGAFAASQPLELFLGNAGTAMRPLAAALCLTDGDIVLTGEPRMKERPIGHLVDALRQGGAKIDYLEQENYPPLRLHGGFQGGEISVDGSVSSQFLTALLMTAPLAAQDTQISIQGDLVSKPYIDITLHMMKAFGIDVRHENYQRFFVAGRQQYRSPGDYLVEGDASSASYFLAAAAIKGGVVRVTGVGRNSVQGDIRFADVLEKMGAIVRWGEDYIECERGELHAIDMDMNHIPDAAMTIATAALFAQGGTTTLRNIYNWRVKETDRLAAMAIELRKVGAEVEEGNDYIRITPPAKLKAAEIGTYNDHRMAMCFSLVALSDTPVTILDPKCTAKTFPDYFEQLARLSELA</sequence>
<accession>Q6D401</accession>
<name>AROA_PECAS</name>
<evidence type="ECO:0000255" key="1">
    <source>
        <dbReference type="HAMAP-Rule" id="MF_00210"/>
    </source>
</evidence>
<feature type="chain" id="PRO_1000012434" description="3-phosphoshikimate 1-carboxyvinyltransferase">
    <location>
        <begin position="1"/>
        <end position="429"/>
    </location>
</feature>
<feature type="active site" description="Proton acceptor" evidence="1">
    <location>
        <position position="314"/>
    </location>
</feature>
<feature type="binding site" evidence="1">
    <location>
        <position position="23"/>
    </location>
    <ligand>
        <name>3-phosphoshikimate</name>
        <dbReference type="ChEBI" id="CHEBI:145989"/>
    </ligand>
</feature>
<feature type="binding site" evidence="1">
    <location>
        <position position="23"/>
    </location>
    <ligand>
        <name>phosphoenolpyruvate</name>
        <dbReference type="ChEBI" id="CHEBI:58702"/>
    </ligand>
</feature>
<feature type="binding site" evidence="1">
    <location>
        <position position="24"/>
    </location>
    <ligand>
        <name>3-phosphoshikimate</name>
        <dbReference type="ChEBI" id="CHEBI:145989"/>
    </ligand>
</feature>
<feature type="binding site" evidence="1">
    <location>
        <position position="28"/>
    </location>
    <ligand>
        <name>3-phosphoshikimate</name>
        <dbReference type="ChEBI" id="CHEBI:145989"/>
    </ligand>
</feature>
<feature type="binding site" evidence="1">
    <location>
        <position position="97"/>
    </location>
    <ligand>
        <name>phosphoenolpyruvate</name>
        <dbReference type="ChEBI" id="CHEBI:58702"/>
    </ligand>
</feature>
<feature type="binding site" evidence="1">
    <location>
        <position position="125"/>
    </location>
    <ligand>
        <name>phosphoenolpyruvate</name>
        <dbReference type="ChEBI" id="CHEBI:58702"/>
    </ligand>
</feature>
<feature type="binding site" evidence="1">
    <location>
        <position position="170"/>
    </location>
    <ligand>
        <name>3-phosphoshikimate</name>
        <dbReference type="ChEBI" id="CHEBI:145989"/>
    </ligand>
</feature>
<feature type="binding site" evidence="1">
    <location>
        <position position="171"/>
    </location>
    <ligand>
        <name>3-phosphoshikimate</name>
        <dbReference type="ChEBI" id="CHEBI:145989"/>
    </ligand>
</feature>
<feature type="binding site" evidence="1">
    <location>
        <position position="172"/>
    </location>
    <ligand>
        <name>3-phosphoshikimate</name>
        <dbReference type="ChEBI" id="CHEBI:145989"/>
    </ligand>
</feature>
<feature type="binding site" evidence="1">
    <location>
        <position position="172"/>
    </location>
    <ligand>
        <name>phosphoenolpyruvate</name>
        <dbReference type="ChEBI" id="CHEBI:58702"/>
    </ligand>
</feature>
<feature type="binding site" evidence="1">
    <location>
        <position position="198"/>
    </location>
    <ligand>
        <name>3-phosphoshikimate</name>
        <dbReference type="ChEBI" id="CHEBI:145989"/>
    </ligand>
</feature>
<feature type="binding site" evidence="1">
    <location>
        <position position="314"/>
    </location>
    <ligand>
        <name>3-phosphoshikimate</name>
        <dbReference type="ChEBI" id="CHEBI:145989"/>
    </ligand>
</feature>
<feature type="binding site" evidence="1">
    <location>
        <position position="338"/>
    </location>
    <ligand>
        <name>3-phosphoshikimate</name>
        <dbReference type="ChEBI" id="CHEBI:145989"/>
    </ligand>
</feature>
<feature type="binding site" evidence="1">
    <location>
        <position position="342"/>
    </location>
    <ligand>
        <name>3-phosphoshikimate</name>
        <dbReference type="ChEBI" id="CHEBI:145989"/>
    </ligand>
</feature>
<feature type="binding site" evidence="1">
    <location>
        <position position="346"/>
    </location>
    <ligand>
        <name>phosphoenolpyruvate</name>
        <dbReference type="ChEBI" id="CHEBI:58702"/>
    </ligand>
</feature>
<feature type="binding site" evidence="1">
    <location>
        <position position="388"/>
    </location>
    <ligand>
        <name>phosphoenolpyruvate</name>
        <dbReference type="ChEBI" id="CHEBI:58702"/>
    </ligand>
</feature>
<feature type="binding site" evidence="1">
    <location>
        <position position="413"/>
    </location>
    <ligand>
        <name>phosphoenolpyruvate</name>
        <dbReference type="ChEBI" id="CHEBI:58702"/>
    </ligand>
</feature>
<proteinExistence type="inferred from homology"/>
<reference key="1">
    <citation type="journal article" date="2004" name="Proc. Natl. Acad. Sci. U.S.A.">
        <title>Genome sequence of the enterobacterial phytopathogen Erwinia carotovora subsp. atroseptica and characterization of virulence factors.</title>
        <authorList>
            <person name="Bell K.S."/>
            <person name="Sebaihia M."/>
            <person name="Pritchard L."/>
            <person name="Holden M.T.G."/>
            <person name="Hyman L.J."/>
            <person name="Holeva M.C."/>
            <person name="Thomson N.R."/>
            <person name="Bentley S.D."/>
            <person name="Churcher L.J.C."/>
            <person name="Mungall K."/>
            <person name="Atkin R."/>
            <person name="Bason N."/>
            <person name="Brooks K."/>
            <person name="Chillingworth T."/>
            <person name="Clark K."/>
            <person name="Doggett J."/>
            <person name="Fraser A."/>
            <person name="Hance Z."/>
            <person name="Hauser H."/>
            <person name="Jagels K."/>
            <person name="Moule S."/>
            <person name="Norbertczak H."/>
            <person name="Ormond D."/>
            <person name="Price C."/>
            <person name="Quail M.A."/>
            <person name="Sanders M."/>
            <person name="Walker D."/>
            <person name="Whitehead S."/>
            <person name="Salmond G.P.C."/>
            <person name="Birch P.R.J."/>
            <person name="Parkhill J."/>
            <person name="Toth I.K."/>
        </authorList>
    </citation>
    <scope>NUCLEOTIDE SEQUENCE [LARGE SCALE GENOMIC DNA]</scope>
    <source>
        <strain>SCRI 1043 / ATCC BAA-672</strain>
    </source>
</reference>
<dbReference type="EC" id="2.5.1.19" evidence="1"/>
<dbReference type="EMBL" id="BX950851">
    <property type="protein sequence ID" value="CAG75492.1"/>
    <property type="molecule type" value="Genomic_DNA"/>
</dbReference>
<dbReference type="RefSeq" id="WP_011094137.1">
    <property type="nucleotide sequence ID" value="NC_004547.2"/>
</dbReference>
<dbReference type="SMR" id="Q6D401"/>
<dbReference type="STRING" id="218491.ECA2593"/>
<dbReference type="KEGG" id="eca:ECA2593"/>
<dbReference type="PATRIC" id="fig|218491.5.peg.2627"/>
<dbReference type="eggNOG" id="COG0128">
    <property type="taxonomic scope" value="Bacteria"/>
</dbReference>
<dbReference type="HOGENOM" id="CLU_024321_0_0_6"/>
<dbReference type="OrthoDB" id="9809920at2"/>
<dbReference type="UniPathway" id="UPA00053">
    <property type="reaction ID" value="UER00089"/>
</dbReference>
<dbReference type="Proteomes" id="UP000007966">
    <property type="component" value="Chromosome"/>
</dbReference>
<dbReference type="GO" id="GO:0005737">
    <property type="term" value="C:cytoplasm"/>
    <property type="evidence" value="ECO:0007669"/>
    <property type="project" value="UniProtKB-SubCell"/>
</dbReference>
<dbReference type="GO" id="GO:0003866">
    <property type="term" value="F:3-phosphoshikimate 1-carboxyvinyltransferase activity"/>
    <property type="evidence" value="ECO:0007669"/>
    <property type="project" value="UniProtKB-UniRule"/>
</dbReference>
<dbReference type="GO" id="GO:0008652">
    <property type="term" value="P:amino acid biosynthetic process"/>
    <property type="evidence" value="ECO:0007669"/>
    <property type="project" value="UniProtKB-KW"/>
</dbReference>
<dbReference type="GO" id="GO:0009073">
    <property type="term" value="P:aromatic amino acid family biosynthetic process"/>
    <property type="evidence" value="ECO:0007669"/>
    <property type="project" value="UniProtKB-KW"/>
</dbReference>
<dbReference type="GO" id="GO:0009423">
    <property type="term" value="P:chorismate biosynthetic process"/>
    <property type="evidence" value="ECO:0007669"/>
    <property type="project" value="UniProtKB-UniRule"/>
</dbReference>
<dbReference type="CDD" id="cd01556">
    <property type="entry name" value="EPSP_synthase"/>
    <property type="match status" value="1"/>
</dbReference>
<dbReference type="FunFam" id="3.65.10.10:FF:000003">
    <property type="entry name" value="3-phosphoshikimate 1-carboxyvinyltransferase"/>
    <property type="match status" value="1"/>
</dbReference>
<dbReference type="FunFam" id="3.65.10.10:FF:000004">
    <property type="entry name" value="3-phosphoshikimate 1-carboxyvinyltransferase"/>
    <property type="match status" value="1"/>
</dbReference>
<dbReference type="Gene3D" id="3.65.10.10">
    <property type="entry name" value="Enolpyruvate transferase domain"/>
    <property type="match status" value="2"/>
</dbReference>
<dbReference type="HAMAP" id="MF_00210">
    <property type="entry name" value="EPSP_synth"/>
    <property type="match status" value="1"/>
</dbReference>
<dbReference type="InterPro" id="IPR001986">
    <property type="entry name" value="Enolpyruvate_Tfrase_dom"/>
</dbReference>
<dbReference type="InterPro" id="IPR036968">
    <property type="entry name" value="Enolpyruvate_Tfrase_sf"/>
</dbReference>
<dbReference type="InterPro" id="IPR006264">
    <property type="entry name" value="EPSP_synthase"/>
</dbReference>
<dbReference type="InterPro" id="IPR023193">
    <property type="entry name" value="EPSP_synthase_CS"/>
</dbReference>
<dbReference type="InterPro" id="IPR013792">
    <property type="entry name" value="RNA3'P_cycl/enolpyr_Trfase_a/b"/>
</dbReference>
<dbReference type="NCBIfam" id="TIGR01356">
    <property type="entry name" value="aroA"/>
    <property type="match status" value="1"/>
</dbReference>
<dbReference type="PANTHER" id="PTHR21090">
    <property type="entry name" value="AROM/DEHYDROQUINATE SYNTHASE"/>
    <property type="match status" value="1"/>
</dbReference>
<dbReference type="PANTHER" id="PTHR21090:SF5">
    <property type="entry name" value="PENTAFUNCTIONAL AROM POLYPEPTIDE"/>
    <property type="match status" value="1"/>
</dbReference>
<dbReference type="Pfam" id="PF00275">
    <property type="entry name" value="EPSP_synthase"/>
    <property type="match status" value="1"/>
</dbReference>
<dbReference type="PIRSF" id="PIRSF000505">
    <property type="entry name" value="EPSPS"/>
    <property type="match status" value="1"/>
</dbReference>
<dbReference type="SUPFAM" id="SSF55205">
    <property type="entry name" value="EPT/RTPC-like"/>
    <property type="match status" value="1"/>
</dbReference>
<dbReference type="PROSITE" id="PS00104">
    <property type="entry name" value="EPSP_SYNTHASE_1"/>
    <property type="match status" value="1"/>
</dbReference>
<dbReference type="PROSITE" id="PS00885">
    <property type="entry name" value="EPSP_SYNTHASE_2"/>
    <property type="match status" value="1"/>
</dbReference>
<protein>
    <recommendedName>
        <fullName evidence="1">3-phosphoshikimate 1-carboxyvinyltransferase</fullName>
        <ecNumber evidence="1">2.5.1.19</ecNumber>
    </recommendedName>
    <alternativeName>
        <fullName evidence="1">5-enolpyruvylshikimate-3-phosphate synthase</fullName>
        <shortName evidence="1">EPSP synthase</shortName>
        <shortName evidence="1">EPSPS</shortName>
    </alternativeName>
</protein>
<gene>
    <name evidence="1" type="primary">aroA</name>
    <name type="ordered locus">ECA2593</name>
</gene>
<comment type="function">
    <text evidence="1">Catalyzes the transfer of the enolpyruvyl moiety of phosphoenolpyruvate (PEP) to the 5-hydroxyl of shikimate-3-phosphate (S3P) to produce enolpyruvyl shikimate-3-phosphate and inorganic phosphate.</text>
</comment>
<comment type="catalytic activity">
    <reaction evidence="1">
        <text>3-phosphoshikimate + phosphoenolpyruvate = 5-O-(1-carboxyvinyl)-3-phosphoshikimate + phosphate</text>
        <dbReference type="Rhea" id="RHEA:21256"/>
        <dbReference type="ChEBI" id="CHEBI:43474"/>
        <dbReference type="ChEBI" id="CHEBI:57701"/>
        <dbReference type="ChEBI" id="CHEBI:58702"/>
        <dbReference type="ChEBI" id="CHEBI:145989"/>
        <dbReference type="EC" id="2.5.1.19"/>
    </reaction>
    <physiologicalReaction direction="left-to-right" evidence="1">
        <dbReference type="Rhea" id="RHEA:21257"/>
    </physiologicalReaction>
</comment>
<comment type="pathway">
    <text evidence="1">Metabolic intermediate biosynthesis; chorismate biosynthesis; chorismate from D-erythrose 4-phosphate and phosphoenolpyruvate: step 6/7.</text>
</comment>
<comment type="subunit">
    <text evidence="1">Monomer.</text>
</comment>
<comment type="subcellular location">
    <subcellularLocation>
        <location evidence="1">Cytoplasm</location>
    </subcellularLocation>
</comment>
<comment type="similarity">
    <text evidence="1">Belongs to the EPSP synthase family.</text>
</comment>